<reference key="1">
    <citation type="journal article" date="1998" name="Science">
        <title>Genome sequence of the nematode C. elegans: a platform for investigating biology.</title>
        <authorList>
            <consortium name="The C. elegans sequencing consortium"/>
        </authorList>
    </citation>
    <scope>NUCLEOTIDE SEQUENCE [LARGE SCALE GENOMIC DNA]</scope>
    <source>
        <strain>Bristol N2</strain>
    </source>
</reference>
<reference key="2">
    <citation type="journal article" date="2021" name="Cell">
        <title>Splice site m6A methylation prevents binding of U2AF35 to inhibit RNA splicing.</title>
        <authorList>
            <person name="Mendel M."/>
            <person name="Delaney K."/>
            <person name="Pandey R.R."/>
            <person name="Chen K.M."/>
            <person name="Wenda J.M."/>
            <person name="Vaagboe C.B."/>
            <person name="Steiner F.A."/>
            <person name="Homolka D."/>
            <person name="Pillai R.S."/>
        </authorList>
    </citation>
    <scope>POST-TRANSCRIPTIONAL REGULATION</scope>
</reference>
<name>METK3_CAEEL</name>
<feature type="chain" id="PRO_0000174442" description="Probable S-adenosylmethionine synthase 3">
    <location>
        <begin position="1"/>
        <end position="404"/>
    </location>
</feature>
<feature type="binding site" evidence="2">
    <location>
        <position position="11"/>
    </location>
    <ligand>
        <name>Mg(2+)</name>
        <dbReference type="ChEBI" id="CHEBI:18420"/>
    </ligand>
</feature>
<feature type="binding site" description="in other chain" evidence="3">
    <location>
        <position position="17"/>
    </location>
    <ligand>
        <name>ATP</name>
        <dbReference type="ChEBI" id="CHEBI:30616"/>
        <note>ligand shared between two neighboring subunits</note>
    </ligand>
</feature>
<feature type="binding site" evidence="1">
    <location>
        <position position="45"/>
    </location>
    <ligand>
        <name>K(+)</name>
        <dbReference type="ChEBI" id="CHEBI:29103"/>
    </ligand>
</feature>
<feature type="binding site" description="in other chain" evidence="1">
    <location>
        <position position="58"/>
    </location>
    <ligand>
        <name>L-methionine</name>
        <dbReference type="ChEBI" id="CHEBI:57844"/>
        <note>ligand shared between two neighboring subunits</note>
    </ligand>
</feature>
<feature type="binding site" description="in other chain" evidence="1">
    <location>
        <position position="101"/>
    </location>
    <ligand>
        <name>L-methionine</name>
        <dbReference type="ChEBI" id="CHEBI:57844"/>
        <note>ligand shared between two neighboring subunits</note>
    </ligand>
</feature>
<feature type="binding site" description="in other chain" evidence="3">
    <location>
        <begin position="167"/>
        <end position="169"/>
    </location>
    <ligand>
        <name>ATP</name>
        <dbReference type="ChEBI" id="CHEBI:30616"/>
        <note>ligand shared between two neighboring subunits</note>
    </ligand>
</feature>
<feature type="binding site" description="in other chain" evidence="3">
    <location>
        <begin position="235"/>
        <end position="238"/>
    </location>
    <ligand>
        <name>ATP</name>
        <dbReference type="ChEBI" id="CHEBI:30616"/>
        <note>ligand shared between two neighboring subunits</note>
    </ligand>
</feature>
<feature type="binding site" description="in other chain" evidence="3">
    <location>
        <position position="246"/>
    </location>
    <ligand>
        <name>ATP</name>
        <dbReference type="ChEBI" id="CHEBI:30616"/>
        <note>ligand shared between two neighboring subunits</note>
    </ligand>
</feature>
<feature type="binding site" evidence="1">
    <location>
        <position position="246"/>
    </location>
    <ligand>
        <name>L-methionine</name>
        <dbReference type="ChEBI" id="CHEBI:57844"/>
        <note>ligand shared between two neighboring subunits</note>
    </ligand>
</feature>
<feature type="binding site" description="in other chain" evidence="1">
    <location>
        <begin position="252"/>
        <end position="253"/>
    </location>
    <ligand>
        <name>ATP</name>
        <dbReference type="ChEBI" id="CHEBI:30616"/>
        <note>ligand shared between two neighboring subunits</note>
    </ligand>
</feature>
<feature type="binding site" evidence="1">
    <location>
        <position position="269"/>
    </location>
    <ligand>
        <name>ATP</name>
        <dbReference type="ChEBI" id="CHEBI:30616"/>
        <note>ligand shared between two neighboring subunits</note>
    </ligand>
</feature>
<feature type="binding site" evidence="1">
    <location>
        <position position="273"/>
    </location>
    <ligand>
        <name>ATP</name>
        <dbReference type="ChEBI" id="CHEBI:30616"/>
        <note>ligand shared between two neighboring subunits</note>
    </ligand>
</feature>
<feature type="binding site" evidence="2">
    <location>
        <position position="277"/>
    </location>
    <ligand>
        <name>ATP</name>
        <dbReference type="ChEBI" id="CHEBI:30616"/>
        <note>ligand shared between two neighboring subunits</note>
    </ligand>
</feature>
<feature type="binding site" description="in other chain" evidence="1">
    <location>
        <position position="277"/>
    </location>
    <ligand>
        <name>L-methionine</name>
        <dbReference type="ChEBI" id="CHEBI:57844"/>
        <note>ligand shared between two neighboring subunits</note>
    </ligand>
</feature>
<dbReference type="EC" id="2.5.1.6" evidence="3"/>
<dbReference type="EMBL" id="FO080387">
    <property type="protein sequence ID" value="CCD63366.1"/>
    <property type="molecule type" value="Genomic_DNA"/>
</dbReference>
<dbReference type="PIR" id="T34085">
    <property type="entry name" value="T34085"/>
</dbReference>
<dbReference type="RefSeq" id="NP_500872.1">
    <property type="nucleotide sequence ID" value="NM_068471.8"/>
</dbReference>
<dbReference type="SMR" id="P50305"/>
<dbReference type="BioGRID" id="42477">
    <property type="interactions" value="13"/>
</dbReference>
<dbReference type="FunCoup" id="P50305">
    <property type="interactions" value="2698"/>
</dbReference>
<dbReference type="IntAct" id="P50305">
    <property type="interactions" value="1"/>
</dbReference>
<dbReference type="STRING" id="6239.C06E7.1a.1"/>
<dbReference type="PaxDb" id="6239-C06E7.1a"/>
<dbReference type="PeptideAtlas" id="P50305"/>
<dbReference type="EnsemblMetazoa" id="C06E7.1a.1">
    <property type="protein sequence ID" value="C06E7.1a.1"/>
    <property type="gene ID" value="WBGene00015538"/>
</dbReference>
<dbReference type="GeneID" id="177355"/>
<dbReference type="KEGG" id="cel:CELE_C06E7.1"/>
<dbReference type="UCSC" id="C06E7.1a">
    <property type="organism name" value="c. elegans"/>
</dbReference>
<dbReference type="AGR" id="WB:WBGene00015538"/>
<dbReference type="CTD" id="177355"/>
<dbReference type="WormBase" id="C06E7.1a">
    <property type="protein sequence ID" value="CE03957"/>
    <property type="gene ID" value="WBGene00015538"/>
    <property type="gene designation" value="sams-3"/>
</dbReference>
<dbReference type="eggNOG" id="KOG1506">
    <property type="taxonomic scope" value="Eukaryota"/>
</dbReference>
<dbReference type="GeneTree" id="ENSGT00950000183185"/>
<dbReference type="HOGENOM" id="CLU_041802_1_1_1"/>
<dbReference type="InParanoid" id="P50305"/>
<dbReference type="OMA" id="ASYMARY"/>
<dbReference type="OrthoDB" id="5852090at2759"/>
<dbReference type="PhylomeDB" id="P50305"/>
<dbReference type="UniPathway" id="UPA00315">
    <property type="reaction ID" value="UER00080"/>
</dbReference>
<dbReference type="PRO" id="PR:P50305"/>
<dbReference type="Proteomes" id="UP000001940">
    <property type="component" value="Chromosome IV"/>
</dbReference>
<dbReference type="Bgee" id="WBGene00015538">
    <property type="expression patterns" value="Expressed in adult organism and 3 other cell types or tissues"/>
</dbReference>
<dbReference type="GO" id="GO:0005829">
    <property type="term" value="C:cytosol"/>
    <property type="evidence" value="ECO:0000250"/>
    <property type="project" value="WormBase"/>
</dbReference>
<dbReference type="GO" id="GO:0005524">
    <property type="term" value="F:ATP binding"/>
    <property type="evidence" value="ECO:0007669"/>
    <property type="project" value="UniProtKB-KW"/>
</dbReference>
<dbReference type="GO" id="GO:0046872">
    <property type="term" value="F:metal ion binding"/>
    <property type="evidence" value="ECO:0007669"/>
    <property type="project" value="UniProtKB-KW"/>
</dbReference>
<dbReference type="GO" id="GO:0004478">
    <property type="term" value="F:methionine adenosyltransferase activity"/>
    <property type="evidence" value="ECO:0000318"/>
    <property type="project" value="GO_Central"/>
</dbReference>
<dbReference type="GO" id="GO:0006730">
    <property type="term" value="P:one-carbon metabolic process"/>
    <property type="evidence" value="ECO:0007669"/>
    <property type="project" value="UniProtKB-KW"/>
</dbReference>
<dbReference type="GO" id="GO:0006556">
    <property type="term" value="P:S-adenosylmethionine biosynthetic process"/>
    <property type="evidence" value="ECO:0000318"/>
    <property type="project" value="GO_Central"/>
</dbReference>
<dbReference type="CDD" id="cd18079">
    <property type="entry name" value="S-AdoMet_synt"/>
    <property type="match status" value="1"/>
</dbReference>
<dbReference type="FunFam" id="3.30.300.10:FF:000001">
    <property type="entry name" value="S-adenosylmethionine synthase"/>
    <property type="match status" value="1"/>
</dbReference>
<dbReference type="FunFam" id="3.30.300.10:FF:000003">
    <property type="entry name" value="S-adenosylmethionine synthase"/>
    <property type="match status" value="1"/>
</dbReference>
<dbReference type="FunFam" id="3.30.300.10:FF:000004">
    <property type="entry name" value="S-adenosylmethionine synthase"/>
    <property type="match status" value="1"/>
</dbReference>
<dbReference type="Gene3D" id="3.30.300.10">
    <property type="match status" value="3"/>
</dbReference>
<dbReference type="HAMAP" id="MF_00086">
    <property type="entry name" value="S_AdoMet_synth1"/>
    <property type="match status" value="1"/>
</dbReference>
<dbReference type="InterPro" id="IPR022631">
    <property type="entry name" value="ADOMET_SYNTHASE_CS"/>
</dbReference>
<dbReference type="InterPro" id="IPR022630">
    <property type="entry name" value="S-AdoMet_synt_C"/>
</dbReference>
<dbReference type="InterPro" id="IPR022629">
    <property type="entry name" value="S-AdoMet_synt_central"/>
</dbReference>
<dbReference type="InterPro" id="IPR022628">
    <property type="entry name" value="S-AdoMet_synt_N"/>
</dbReference>
<dbReference type="InterPro" id="IPR002133">
    <property type="entry name" value="S-AdoMet_synthetase"/>
</dbReference>
<dbReference type="InterPro" id="IPR022636">
    <property type="entry name" value="S-AdoMet_synthetase_sfam"/>
</dbReference>
<dbReference type="NCBIfam" id="TIGR01034">
    <property type="entry name" value="metK"/>
    <property type="match status" value="1"/>
</dbReference>
<dbReference type="PANTHER" id="PTHR11964">
    <property type="entry name" value="S-ADENOSYLMETHIONINE SYNTHETASE"/>
    <property type="match status" value="1"/>
</dbReference>
<dbReference type="Pfam" id="PF02773">
    <property type="entry name" value="S-AdoMet_synt_C"/>
    <property type="match status" value="1"/>
</dbReference>
<dbReference type="Pfam" id="PF02772">
    <property type="entry name" value="S-AdoMet_synt_M"/>
    <property type="match status" value="1"/>
</dbReference>
<dbReference type="Pfam" id="PF00438">
    <property type="entry name" value="S-AdoMet_synt_N"/>
    <property type="match status" value="1"/>
</dbReference>
<dbReference type="PIRSF" id="PIRSF000497">
    <property type="entry name" value="MAT"/>
    <property type="match status" value="1"/>
</dbReference>
<dbReference type="SUPFAM" id="SSF55973">
    <property type="entry name" value="S-adenosylmethionine synthetase"/>
    <property type="match status" value="3"/>
</dbReference>
<dbReference type="PROSITE" id="PS00376">
    <property type="entry name" value="ADOMET_SYNTHASE_1"/>
    <property type="match status" value="1"/>
</dbReference>
<dbReference type="PROSITE" id="PS00377">
    <property type="entry name" value="ADOMET_SYNTHASE_2"/>
    <property type="match status" value="1"/>
</dbReference>
<evidence type="ECO:0000250" key="1">
    <source>
        <dbReference type="UniProtKB" id="P0A817"/>
    </source>
</evidence>
<evidence type="ECO:0000250" key="2">
    <source>
        <dbReference type="UniProtKB" id="P13444"/>
    </source>
</evidence>
<evidence type="ECO:0000250" key="3">
    <source>
        <dbReference type="UniProtKB" id="Q00266"/>
    </source>
</evidence>
<evidence type="ECO:0000269" key="4">
    <source>
    </source>
</evidence>
<evidence type="ECO:0000305" key="5"/>
<gene>
    <name type="primary">sams-3</name>
    <name type="ORF">C06E7.1</name>
</gene>
<accession>P50305</accession>
<proteinExistence type="evidence at protein level"/>
<organism>
    <name type="scientific">Caenorhabditis elegans</name>
    <dbReference type="NCBI Taxonomy" id="6239"/>
    <lineage>
        <taxon>Eukaryota</taxon>
        <taxon>Metazoa</taxon>
        <taxon>Ecdysozoa</taxon>
        <taxon>Nematoda</taxon>
        <taxon>Chromadorea</taxon>
        <taxon>Rhabditida</taxon>
        <taxon>Rhabditina</taxon>
        <taxon>Rhabditomorpha</taxon>
        <taxon>Rhabditoidea</taxon>
        <taxon>Rhabditidae</taxon>
        <taxon>Peloderinae</taxon>
        <taxon>Caenorhabditis</taxon>
    </lineage>
</organism>
<sequence length="404" mass="44034">MSQHKFLFTSESVSEGHPDKMCDQISDAVLDAHLAQDPHAKVACETVTKTGMIMLCGEITSKAVVDYQVLVRNVIKKIGYDDSSKGFDYKTCNVLVALEQQSPEIAAGVHVDKDSDDVGAGDQGIMFGYATDETEEAMPLTLLLSHKLNRKLHELRRSGELEWVRPDSKTQVTIEYASEGGACVPLRVHTVVISTQHSPDISLDDLRKELIEKVIKAVIPANLIDDKTIYHLNPCGSFIIGGPMGDAGLTGRKIIVDTYGGWGAHGGGAFSGKDPTKVDRSAAYAARWVAKSLVKSGLCRRCLVQVSYAIGVAKPLSVMVFSFGTSALNEGELLKIVNDNFDLRPGMIIKDLDLKKPIYEPTAENGHFGHNEFPWEQPRHLQIDVELLKKIGGKTISNGNGIAH</sequence>
<comment type="function">
    <text evidence="3">Catalyzes the formation of S-adenosylmethionine from methionine and ATP. The reaction comprises two steps that are both catalyzed by the same enzyme: formation of S-adenosylmethionine (AdoMet) and triphosphate, and subsequent hydrolysis of the triphosphate.</text>
</comment>
<comment type="catalytic activity">
    <reaction evidence="3">
        <text>L-methionine + ATP + H2O = S-adenosyl-L-methionine + phosphate + diphosphate</text>
        <dbReference type="Rhea" id="RHEA:21080"/>
        <dbReference type="ChEBI" id="CHEBI:15377"/>
        <dbReference type="ChEBI" id="CHEBI:30616"/>
        <dbReference type="ChEBI" id="CHEBI:33019"/>
        <dbReference type="ChEBI" id="CHEBI:43474"/>
        <dbReference type="ChEBI" id="CHEBI:57844"/>
        <dbReference type="ChEBI" id="CHEBI:59789"/>
        <dbReference type="EC" id="2.5.1.6"/>
    </reaction>
</comment>
<comment type="cofactor">
    <cofactor evidence="2">
        <name>Mg(2+)</name>
        <dbReference type="ChEBI" id="CHEBI:18420"/>
    </cofactor>
    <text evidence="2">Binds 2 magnesium ions per subunit. The magnesium ions interact primarily with the substrate.</text>
</comment>
<comment type="cofactor">
    <cofactor evidence="2">
        <name>K(+)</name>
        <dbReference type="ChEBI" id="CHEBI:29103"/>
    </cofactor>
    <text evidence="2">Binds 1 potassium ion per subunit. The potassium ion interacts primarily with the substrate.</text>
</comment>
<comment type="pathway">
    <text evidence="3">Amino-acid biosynthesis; S-adenosyl-L-methionine biosynthesis; S-adenosyl-L-methionine from L-methionine: step 1/1.</text>
</comment>
<comment type="interaction">
    <interactant intactId="EBI-2412743">
        <id>P50305</id>
    </interactant>
    <interactant intactId="EBI-2412749">
        <id>O17680</id>
        <label>sams-1</label>
    </interactant>
    <organismsDiffer>false</organismsDiffer>
    <experiments>4</experiments>
</comment>
<comment type="miscellaneous">
    <text evidence="4">Protein expression is regulated by post-transcriptional regulation: under rich-diet conditions, mett-10 binds and methylates sams-3 mRNA, directly inhibiting splicing and protein production of S-adenosylmethionine synthase.</text>
</comment>
<comment type="similarity">
    <text evidence="5">Belongs to the AdoMet synthase family.</text>
</comment>
<keyword id="KW-0067">ATP-binding</keyword>
<keyword id="KW-0460">Magnesium</keyword>
<keyword id="KW-0479">Metal-binding</keyword>
<keyword id="KW-0547">Nucleotide-binding</keyword>
<keyword id="KW-0554">One-carbon metabolism</keyword>
<keyword id="KW-0630">Potassium</keyword>
<keyword id="KW-1185">Reference proteome</keyword>
<keyword id="KW-0808">Transferase</keyword>
<protein>
    <recommendedName>
        <fullName>Probable S-adenosylmethionine synthase 3</fullName>
        <shortName>AdoMet synthase 3</shortName>
        <ecNumber evidence="3">2.5.1.6</ecNumber>
    </recommendedName>
    <alternativeName>
        <fullName>Methionine adenosyltransferase 3</fullName>
        <shortName>MAT 3</shortName>
    </alternativeName>
</protein>